<accession>B2I804</accession>
<evidence type="ECO:0000255" key="1">
    <source>
        <dbReference type="HAMAP-Rule" id="MF_00409"/>
    </source>
</evidence>
<dbReference type="EC" id="2.7.1.130" evidence="1"/>
<dbReference type="EMBL" id="CP001011">
    <property type="protein sequence ID" value="ACB91802.1"/>
    <property type="molecule type" value="Genomic_DNA"/>
</dbReference>
<dbReference type="RefSeq" id="WP_004089261.1">
    <property type="nucleotide sequence ID" value="NC_010577.1"/>
</dbReference>
<dbReference type="SMR" id="B2I804"/>
<dbReference type="GeneID" id="93904063"/>
<dbReference type="KEGG" id="xfn:XfasM23_0354"/>
<dbReference type="HOGENOM" id="CLU_038816_2_0_6"/>
<dbReference type="UniPathway" id="UPA00359">
    <property type="reaction ID" value="UER00482"/>
</dbReference>
<dbReference type="Proteomes" id="UP000001698">
    <property type="component" value="Chromosome"/>
</dbReference>
<dbReference type="GO" id="GO:0005886">
    <property type="term" value="C:plasma membrane"/>
    <property type="evidence" value="ECO:0007669"/>
    <property type="project" value="TreeGrafter"/>
</dbReference>
<dbReference type="GO" id="GO:0005524">
    <property type="term" value="F:ATP binding"/>
    <property type="evidence" value="ECO:0007669"/>
    <property type="project" value="UniProtKB-UniRule"/>
</dbReference>
<dbReference type="GO" id="GO:0009029">
    <property type="term" value="F:tetraacyldisaccharide 4'-kinase activity"/>
    <property type="evidence" value="ECO:0007669"/>
    <property type="project" value="UniProtKB-UniRule"/>
</dbReference>
<dbReference type="GO" id="GO:0009245">
    <property type="term" value="P:lipid A biosynthetic process"/>
    <property type="evidence" value="ECO:0007669"/>
    <property type="project" value="UniProtKB-UniRule"/>
</dbReference>
<dbReference type="GO" id="GO:0009244">
    <property type="term" value="P:lipopolysaccharide core region biosynthetic process"/>
    <property type="evidence" value="ECO:0007669"/>
    <property type="project" value="TreeGrafter"/>
</dbReference>
<dbReference type="HAMAP" id="MF_00409">
    <property type="entry name" value="LpxK"/>
    <property type="match status" value="1"/>
</dbReference>
<dbReference type="InterPro" id="IPR003758">
    <property type="entry name" value="LpxK"/>
</dbReference>
<dbReference type="InterPro" id="IPR027417">
    <property type="entry name" value="P-loop_NTPase"/>
</dbReference>
<dbReference type="NCBIfam" id="TIGR00682">
    <property type="entry name" value="lpxK"/>
    <property type="match status" value="1"/>
</dbReference>
<dbReference type="PANTHER" id="PTHR42724">
    <property type="entry name" value="TETRAACYLDISACCHARIDE 4'-KINASE"/>
    <property type="match status" value="1"/>
</dbReference>
<dbReference type="PANTHER" id="PTHR42724:SF1">
    <property type="entry name" value="TETRAACYLDISACCHARIDE 4'-KINASE, MITOCHONDRIAL-RELATED"/>
    <property type="match status" value="1"/>
</dbReference>
<dbReference type="Pfam" id="PF02606">
    <property type="entry name" value="LpxK"/>
    <property type="match status" value="1"/>
</dbReference>
<dbReference type="SUPFAM" id="SSF52540">
    <property type="entry name" value="P-loop containing nucleoside triphosphate hydrolases"/>
    <property type="match status" value="1"/>
</dbReference>
<proteinExistence type="inferred from homology"/>
<comment type="function">
    <text evidence="1">Transfers the gamma-phosphate of ATP to the 4'-position of a tetraacyldisaccharide 1-phosphate intermediate (termed DS-1-P) to form tetraacyldisaccharide 1,4'-bis-phosphate (lipid IVA).</text>
</comment>
<comment type="catalytic activity">
    <reaction evidence="1">
        <text>a lipid A disaccharide + ATP = a lipid IVA + ADP + H(+)</text>
        <dbReference type="Rhea" id="RHEA:67840"/>
        <dbReference type="ChEBI" id="CHEBI:15378"/>
        <dbReference type="ChEBI" id="CHEBI:30616"/>
        <dbReference type="ChEBI" id="CHEBI:176343"/>
        <dbReference type="ChEBI" id="CHEBI:176425"/>
        <dbReference type="ChEBI" id="CHEBI:456216"/>
        <dbReference type="EC" id="2.7.1.130"/>
    </reaction>
</comment>
<comment type="pathway">
    <text evidence="1">Glycolipid biosynthesis; lipid IV(A) biosynthesis; lipid IV(A) from (3R)-3-hydroxytetradecanoyl-[acyl-carrier-protein] and UDP-N-acetyl-alpha-D-glucosamine: step 6/6.</text>
</comment>
<comment type="similarity">
    <text evidence="1">Belongs to the LpxK family.</text>
</comment>
<sequence>MSSGRGSRIPEYWYGQVPVPPFMRFMEVIYAGAVSLRRLAYRRGWRRRYGVAVPVVVIGNLVAGGTGKTPLTIEIVARLREAGWTPGIASRGYGRRDPKTPRWIQPDTPIELAGDEPAMIAWKTGMRVRVDVDRSAAARALVAEGCDIVVCDDGLQHYRLMRDIEIEVIDGQRRYGNGHLLPAGPLREPMVRGRLCDFRVLNAGQYSDRPTSGFGPSDWQMRLHIDHAQSLQGSRRRSLDAFSGQRVHAVAGIAHPERFFSMLRQRGIGVVPHAFPDHHFYRAEDFTFGSRLPVLMTEKDAVKCRAFADDWFFSVPLRVELPTVFWTALFDRLERLVSC</sequence>
<name>LPXK_XYLF2</name>
<reference key="1">
    <citation type="journal article" date="2010" name="J. Bacteriol.">
        <title>Whole genome sequences of two Xylella fastidiosa strains (M12 and M23) causing almond leaf scorch disease in California.</title>
        <authorList>
            <person name="Chen J."/>
            <person name="Xie G."/>
            <person name="Han S."/>
            <person name="Chertkov O."/>
            <person name="Sims D."/>
            <person name="Civerolo E.L."/>
        </authorList>
    </citation>
    <scope>NUCLEOTIDE SEQUENCE [LARGE SCALE GENOMIC DNA]</scope>
    <source>
        <strain>M23</strain>
    </source>
</reference>
<organism>
    <name type="scientific">Xylella fastidiosa (strain M23)</name>
    <dbReference type="NCBI Taxonomy" id="405441"/>
    <lineage>
        <taxon>Bacteria</taxon>
        <taxon>Pseudomonadati</taxon>
        <taxon>Pseudomonadota</taxon>
        <taxon>Gammaproteobacteria</taxon>
        <taxon>Lysobacterales</taxon>
        <taxon>Lysobacteraceae</taxon>
        <taxon>Xylella</taxon>
    </lineage>
</organism>
<gene>
    <name evidence="1" type="primary">lpxK</name>
    <name type="ordered locus">XfasM23_0354</name>
</gene>
<protein>
    <recommendedName>
        <fullName evidence="1">Tetraacyldisaccharide 4'-kinase</fullName>
        <ecNumber evidence="1">2.7.1.130</ecNumber>
    </recommendedName>
    <alternativeName>
        <fullName evidence="1">Lipid A 4'-kinase</fullName>
    </alternativeName>
</protein>
<keyword id="KW-0067">ATP-binding</keyword>
<keyword id="KW-0418">Kinase</keyword>
<keyword id="KW-0441">Lipid A biosynthesis</keyword>
<keyword id="KW-0444">Lipid biosynthesis</keyword>
<keyword id="KW-0443">Lipid metabolism</keyword>
<keyword id="KW-0547">Nucleotide-binding</keyword>
<keyword id="KW-0808">Transferase</keyword>
<feature type="chain" id="PRO_1000134754" description="Tetraacyldisaccharide 4'-kinase">
    <location>
        <begin position="1"/>
        <end position="339"/>
    </location>
</feature>
<feature type="binding site" evidence="1">
    <location>
        <begin position="62"/>
        <end position="69"/>
    </location>
    <ligand>
        <name>ATP</name>
        <dbReference type="ChEBI" id="CHEBI:30616"/>
    </ligand>
</feature>